<reference key="1">
    <citation type="journal article" date="2000" name="J. Biol. Chem.">
        <title>The RIM/NIM family of neuronal C2 domain proteins. Interactions with Rab3 and a new class of Src homology 3 domain proteins.</title>
        <authorList>
            <person name="Wang Y."/>
            <person name="Sugita S."/>
            <person name="Suedhof T.C."/>
        </authorList>
    </citation>
    <scope>NUCLEOTIDE SEQUENCE [MRNA] (ISOFORMS 1; 2; 3; 4; 5; 6; 8; 9 AND 10)</scope>
    <scope>TISSUE SPECIFICITY</scope>
    <scope>INTERACTION WITH RAB3A; RAB3B; RIM BINDING PROTEINS 1 AND 2</scope>
</reference>
<reference key="2">
    <citation type="journal article" date="2003" name="Genomics">
        <title>Genomic definition of RIM proteins: evolutionary amplification of a family of synaptic regulatory proteins.</title>
        <authorList>
            <person name="Wang Y."/>
            <person name="Suedhof T.C."/>
        </authorList>
    </citation>
    <scope>NUCLEOTIDE SEQUENCE [MRNA] (ISOFORM 7)</scope>
    <scope>GENOMIC ORGANIZATION</scope>
</reference>
<reference key="3">
    <citation type="journal article" date="2002" name="Nature">
        <title>RIM1alpha forms a protein scaffold for regulating neurotransmitter release at the active zone.</title>
        <authorList>
            <person name="Schoch S."/>
            <person name="Castillo P.E."/>
            <person name="Jo T."/>
            <person name="Mukherjee K."/>
            <person name="Geppert M."/>
            <person name="Wang Y."/>
            <person name="Schmitz F."/>
            <person name="Malenka R.C."/>
            <person name="Suedhof T.C."/>
        </authorList>
    </citation>
    <scope>INTERACTION WITH PPFIA3 AND PPFIA4</scope>
    <source>
        <tissue>Brain</tissue>
    </source>
</reference>
<reference key="4">
    <citation type="journal article" date="2006" name="Proc. Natl. Acad. Sci. U.S.A.">
        <title>Quantitative phosphoproteomics of vasopressin-sensitive renal cells: regulation of aquaporin-2 phosphorylation at two sites.</title>
        <authorList>
            <person name="Hoffert J.D."/>
            <person name="Pisitkun T."/>
            <person name="Wang G."/>
            <person name="Shen R.-F."/>
            <person name="Knepper M.A."/>
        </authorList>
    </citation>
    <scope>IDENTIFICATION BY MASS SPECTROMETRY [LARGE SCALE ANALYSIS]</scope>
</reference>
<reference key="5">
    <citation type="journal article" date="2012" name="Nat. Commun.">
        <title>Quantitative maps of protein phosphorylation sites across 14 different rat organs and tissues.</title>
        <authorList>
            <person name="Lundby A."/>
            <person name="Secher A."/>
            <person name="Lage K."/>
            <person name="Nordsborg N.B."/>
            <person name="Dmytriyev A."/>
            <person name="Lundby C."/>
            <person name="Olsen J.V."/>
        </authorList>
    </citation>
    <scope>PHOSPHORYLATION [LARGE SCALE ANALYSIS] AT SER-1106; SER-1200; SER-1276; SER-1540 AND SER-1543</scope>
    <scope>IDENTIFICATION BY MASS SPECTROMETRY [LARGE SCALE ANALYSIS]</scope>
</reference>
<reference key="6">
    <citation type="journal article" date="2006" name="PLoS Biol.">
        <title>Structural basis for a Munc13-1 homodimer to Munc13-1/RIM heterodimer switch.</title>
        <authorList>
            <person name="Lu J."/>
            <person name="Machius M."/>
            <person name="Dulubova I."/>
            <person name="Dai H."/>
            <person name="Suedhof T.C."/>
            <person name="Tomchick D.R."/>
            <person name="Rizo J."/>
        </authorList>
    </citation>
    <scope>X-RAY CRYSTALLOGRAPHY (1.78 ANGSTROMS) OF 83-142 IN COMPLEX WITH UNC13A</scope>
</reference>
<reference key="7">
    <citation type="journal article" date="2005" name="EMBO J.">
        <title>A Munc13/RIM/Rab3 tripartite complex: from priming to plasticity?</title>
        <authorList>
            <person name="Dulubova I."/>
            <person name="Lou X."/>
            <person name="Lu J."/>
            <person name="Huryeva I."/>
            <person name="Alam A."/>
            <person name="Schneggenburger R."/>
            <person name="Suedhof T.C."/>
            <person name="Rizo J."/>
        </authorList>
    </citation>
    <scope>STRUCTURE BY NMR OF 83-142</scope>
    <scope>INTERACTION WITH UNC13A</scope>
</reference>
<evidence type="ECO:0000250" key="1"/>
<evidence type="ECO:0000250" key="2">
    <source>
        <dbReference type="UniProtKB" id="Q9EQZ7"/>
    </source>
</evidence>
<evidence type="ECO:0000250" key="3">
    <source>
        <dbReference type="UniProtKB" id="Q9UQ26"/>
    </source>
</evidence>
<evidence type="ECO:0000255" key="4">
    <source>
        <dbReference type="PROSITE-ProRule" id="PRU00041"/>
    </source>
</evidence>
<evidence type="ECO:0000255" key="5">
    <source>
        <dbReference type="PROSITE-ProRule" id="PRU00091"/>
    </source>
</evidence>
<evidence type="ECO:0000255" key="6">
    <source>
        <dbReference type="PROSITE-ProRule" id="PRU00143"/>
    </source>
</evidence>
<evidence type="ECO:0000255" key="7">
    <source>
        <dbReference type="PROSITE-ProRule" id="PRU00234"/>
    </source>
</evidence>
<evidence type="ECO:0000256" key="8">
    <source>
        <dbReference type="SAM" id="MobiDB-lite"/>
    </source>
</evidence>
<evidence type="ECO:0000269" key="9">
    <source>
    </source>
</evidence>
<evidence type="ECO:0000269" key="10">
    <source>
    </source>
</evidence>
<evidence type="ECO:0000269" key="11">
    <source>
    </source>
</evidence>
<evidence type="ECO:0000269" key="12">
    <source>
    </source>
</evidence>
<evidence type="ECO:0000303" key="13">
    <source>
    </source>
</evidence>
<evidence type="ECO:0000303" key="14">
    <source>
    </source>
</evidence>
<evidence type="ECO:0007744" key="15">
    <source>
    </source>
</evidence>
<evidence type="ECO:0007829" key="16">
    <source>
        <dbReference type="PDB" id="2BWQ"/>
    </source>
</evidence>
<evidence type="ECO:0007829" key="17">
    <source>
        <dbReference type="PDB" id="2CJS"/>
    </source>
</evidence>
<name>RIMS2_RAT</name>
<gene>
    <name type="primary">Rims2</name>
    <name type="synonym">Rim2</name>
</gene>
<keyword id="KW-0002">3D-structure</keyword>
<keyword id="KW-0025">Alternative splicing</keyword>
<keyword id="KW-1003">Cell membrane</keyword>
<keyword id="KW-0966">Cell projection</keyword>
<keyword id="KW-0221">Differentiation</keyword>
<keyword id="KW-0268">Exocytosis</keyword>
<keyword id="KW-0472">Membrane</keyword>
<keyword id="KW-0479">Metal-binding</keyword>
<keyword id="KW-0532">Neurotransmitter transport</keyword>
<keyword id="KW-0597">Phosphoprotein</keyword>
<keyword id="KW-1185">Reference proteome</keyword>
<keyword id="KW-0677">Repeat</keyword>
<keyword id="KW-0770">Synapse</keyword>
<keyword id="KW-0813">Transport</keyword>
<keyword id="KW-0862">Zinc</keyword>
<keyword id="KW-0863">Zinc-finger</keyword>
<organism>
    <name type="scientific">Rattus norvegicus</name>
    <name type="common">Rat</name>
    <dbReference type="NCBI Taxonomy" id="10116"/>
    <lineage>
        <taxon>Eukaryota</taxon>
        <taxon>Metazoa</taxon>
        <taxon>Chordata</taxon>
        <taxon>Craniata</taxon>
        <taxon>Vertebrata</taxon>
        <taxon>Euteleostomi</taxon>
        <taxon>Mammalia</taxon>
        <taxon>Eutheria</taxon>
        <taxon>Euarchontoglires</taxon>
        <taxon>Glires</taxon>
        <taxon>Rodentia</taxon>
        <taxon>Myomorpha</taxon>
        <taxon>Muroidea</taxon>
        <taxon>Muridae</taxon>
        <taxon>Murinae</taxon>
        <taxon>Rattus</taxon>
    </lineage>
</organism>
<dbReference type="EMBL" id="AF199322">
    <property type="protein sequence ID" value="AAF81644.1"/>
    <property type="molecule type" value="mRNA"/>
</dbReference>
<dbReference type="EMBL" id="AF199323">
    <property type="protein sequence ID" value="AAF81645.1"/>
    <property type="molecule type" value="mRNA"/>
</dbReference>
<dbReference type="EMBL" id="AF199324">
    <property type="protein sequence ID" value="AAF81646.1"/>
    <property type="molecule type" value="mRNA"/>
</dbReference>
<dbReference type="EMBL" id="AF199325">
    <property type="protein sequence ID" value="AAF81647.1"/>
    <property type="molecule type" value="mRNA"/>
</dbReference>
<dbReference type="EMBL" id="AF199326">
    <property type="protein sequence ID" value="AAF81648.1"/>
    <property type="molecule type" value="mRNA"/>
</dbReference>
<dbReference type="EMBL" id="AF199327">
    <property type="protein sequence ID" value="AAF81649.1"/>
    <property type="molecule type" value="mRNA"/>
</dbReference>
<dbReference type="EMBL" id="AF199328">
    <property type="protein sequence ID" value="AAF81650.1"/>
    <property type="molecule type" value="mRNA"/>
</dbReference>
<dbReference type="EMBL" id="AF199329">
    <property type="protein sequence ID" value="AAF81651.1"/>
    <property type="molecule type" value="mRNA"/>
</dbReference>
<dbReference type="EMBL" id="AF199330">
    <property type="protein sequence ID" value="AAF81652.1"/>
    <property type="molecule type" value="mRNA"/>
</dbReference>
<dbReference type="EMBL" id="AF199331">
    <property type="protein sequence ID" value="AAF81653.1"/>
    <property type="molecule type" value="mRNA"/>
</dbReference>
<dbReference type="EMBL" id="AF199332">
    <property type="protein sequence ID" value="AAF81654.1"/>
    <property type="molecule type" value="mRNA"/>
</dbReference>
<dbReference type="EMBL" id="AF199335">
    <property type="protein sequence ID" value="AAF81657.1"/>
    <property type="molecule type" value="mRNA"/>
</dbReference>
<dbReference type="EMBL" id="AF548738">
    <property type="protein sequence ID" value="AAN59930.1"/>
    <property type="molecule type" value="mRNA"/>
</dbReference>
<dbReference type="RefSeq" id="NP_446397.1">
    <molecule id="Q9JIS1-1"/>
    <property type="nucleotide sequence ID" value="NM_053945.2"/>
</dbReference>
<dbReference type="RefSeq" id="NP_665888.1">
    <molecule id="Q9JIS1-10"/>
    <property type="nucleotide sequence ID" value="NM_145881.2"/>
</dbReference>
<dbReference type="PDB" id="2A20">
    <property type="method" value="NMR"/>
    <property type="chains" value="A=83-142"/>
</dbReference>
<dbReference type="PDB" id="2BWQ">
    <property type="method" value="X-ray"/>
    <property type="resolution" value="1.41 A"/>
    <property type="chains" value="A=725-869"/>
</dbReference>
<dbReference type="PDB" id="2CJS">
    <property type="method" value="X-ray"/>
    <property type="resolution" value="1.78 A"/>
    <property type="chains" value="C=83-142"/>
</dbReference>
<dbReference type="PDBsum" id="2A20"/>
<dbReference type="PDBsum" id="2BWQ"/>
<dbReference type="PDBsum" id="2CJS"/>
<dbReference type="BMRB" id="Q9JIS1"/>
<dbReference type="SMR" id="Q9JIS1"/>
<dbReference type="BioGRID" id="250611">
    <property type="interactions" value="4"/>
</dbReference>
<dbReference type="CORUM" id="Q9JIS1"/>
<dbReference type="DIP" id="DIP-29192N"/>
<dbReference type="FunCoup" id="Q9JIS1">
    <property type="interactions" value="2583"/>
</dbReference>
<dbReference type="IntAct" id="Q9JIS1">
    <property type="interactions" value="2"/>
</dbReference>
<dbReference type="MINT" id="Q9JIS1"/>
<dbReference type="STRING" id="10116.ENSRNOP00000043010"/>
<dbReference type="GlyGen" id="Q9JIS1">
    <property type="glycosylation" value="1 site"/>
</dbReference>
<dbReference type="iPTMnet" id="Q9JIS1"/>
<dbReference type="PhosphoSitePlus" id="Q9JIS1"/>
<dbReference type="PaxDb" id="10116-ENSRNOP00000045165"/>
<dbReference type="Ensembl" id="ENSRNOT00000006393.5">
    <molecule id="Q9JIS1-10"/>
    <property type="protein sequence ID" value="ENSRNOP00000006393.2"/>
    <property type="gene ID" value="ENSRNOG00000004201.8"/>
</dbReference>
<dbReference type="GeneID" id="116839"/>
<dbReference type="KEGG" id="rno:116839"/>
<dbReference type="AGR" id="RGD:620001"/>
<dbReference type="CTD" id="9699"/>
<dbReference type="RGD" id="620001">
    <property type="gene designation" value="Rims2"/>
</dbReference>
<dbReference type="VEuPathDB" id="HostDB:ENSRNOG00000004201"/>
<dbReference type="eggNOG" id="KOG2060">
    <property type="taxonomic scope" value="Eukaryota"/>
</dbReference>
<dbReference type="eggNOG" id="KOG3799">
    <property type="taxonomic scope" value="Eukaryota"/>
</dbReference>
<dbReference type="GeneTree" id="ENSGT00940000155236"/>
<dbReference type="HOGENOM" id="CLU_071205_0_0_1"/>
<dbReference type="InParanoid" id="Q9JIS1"/>
<dbReference type="OrthoDB" id="420032at2759"/>
<dbReference type="EvolutionaryTrace" id="Q9JIS1"/>
<dbReference type="PRO" id="PR:Q9JIS1"/>
<dbReference type="Proteomes" id="UP000002494">
    <property type="component" value="Chromosome 7"/>
</dbReference>
<dbReference type="Bgee" id="ENSRNOG00000004201">
    <property type="expression patterns" value="Expressed in frontal cortex and 16 other cell types or tissues"/>
</dbReference>
<dbReference type="ExpressionAtlas" id="Q9JIS1">
    <property type="expression patterns" value="baseline and differential"/>
</dbReference>
<dbReference type="GO" id="GO:0042995">
    <property type="term" value="C:cell projection"/>
    <property type="evidence" value="ECO:0007669"/>
    <property type="project" value="UniProtKB-KW"/>
</dbReference>
<dbReference type="GO" id="GO:0098982">
    <property type="term" value="C:GABA-ergic synapse"/>
    <property type="evidence" value="ECO:0000266"/>
    <property type="project" value="RGD"/>
</dbReference>
<dbReference type="GO" id="GO:0098978">
    <property type="term" value="C:glutamatergic synapse"/>
    <property type="evidence" value="ECO:0000266"/>
    <property type="project" value="RGD"/>
</dbReference>
<dbReference type="GO" id="GO:0060077">
    <property type="term" value="C:inhibitory synapse"/>
    <property type="evidence" value="ECO:0000266"/>
    <property type="project" value="RGD"/>
</dbReference>
<dbReference type="GO" id="GO:0098684">
    <property type="term" value="C:photoreceptor ribbon synapse"/>
    <property type="evidence" value="ECO:0000314"/>
    <property type="project" value="SynGO"/>
</dbReference>
<dbReference type="GO" id="GO:0098831">
    <property type="term" value="C:presynaptic active zone cytoplasmic component"/>
    <property type="evidence" value="ECO:0000314"/>
    <property type="project" value="SynGO"/>
</dbReference>
<dbReference type="GO" id="GO:0042734">
    <property type="term" value="C:presynaptic membrane"/>
    <property type="evidence" value="ECO:0000318"/>
    <property type="project" value="GO_Central"/>
</dbReference>
<dbReference type="GO" id="GO:0032991">
    <property type="term" value="C:protein-containing complex"/>
    <property type="evidence" value="ECO:0000314"/>
    <property type="project" value="RGD"/>
</dbReference>
<dbReference type="GO" id="GO:0019904">
    <property type="term" value="F:protein domain specific binding"/>
    <property type="evidence" value="ECO:0000314"/>
    <property type="project" value="RGD"/>
</dbReference>
<dbReference type="GO" id="GO:0044877">
    <property type="term" value="F:protein-containing complex binding"/>
    <property type="evidence" value="ECO:0000314"/>
    <property type="project" value="RGD"/>
</dbReference>
<dbReference type="GO" id="GO:0030674">
    <property type="term" value="F:protein-macromolecule adaptor activity"/>
    <property type="evidence" value="ECO:0000266"/>
    <property type="project" value="RGD"/>
</dbReference>
<dbReference type="GO" id="GO:0031267">
    <property type="term" value="F:small GTPase binding"/>
    <property type="evidence" value="ECO:0007669"/>
    <property type="project" value="InterPro"/>
</dbReference>
<dbReference type="GO" id="GO:0098882">
    <property type="term" value="F:structural constituent of presynaptic active zone"/>
    <property type="evidence" value="ECO:0000266"/>
    <property type="project" value="RGD"/>
</dbReference>
<dbReference type="GO" id="GO:0044325">
    <property type="term" value="F:transmembrane transporter binding"/>
    <property type="evidence" value="ECO:0000250"/>
    <property type="project" value="ParkinsonsUK-UCL"/>
</dbReference>
<dbReference type="GO" id="GO:0008270">
    <property type="term" value="F:zinc ion binding"/>
    <property type="evidence" value="ECO:0007669"/>
    <property type="project" value="UniProtKB-KW"/>
</dbReference>
<dbReference type="GO" id="GO:0007188">
    <property type="term" value="P:adenylate cyclase-modulating G protein-coupled receptor signaling pathway"/>
    <property type="evidence" value="ECO:0000266"/>
    <property type="project" value="RGD"/>
</dbReference>
<dbReference type="GO" id="GO:0048791">
    <property type="term" value="P:calcium ion-regulated exocytosis of neurotransmitter"/>
    <property type="evidence" value="ECO:0000250"/>
    <property type="project" value="ParkinsonsUK-UCL"/>
</dbReference>
<dbReference type="GO" id="GO:0017156">
    <property type="term" value="P:calcium-ion regulated exocytosis"/>
    <property type="evidence" value="ECO:0000250"/>
    <property type="project" value="ParkinsonsUK-UCL"/>
</dbReference>
<dbReference type="GO" id="GO:0030154">
    <property type="term" value="P:cell differentiation"/>
    <property type="evidence" value="ECO:0007669"/>
    <property type="project" value="UniProtKB-KW"/>
</dbReference>
<dbReference type="GO" id="GO:0051649">
    <property type="term" value="P:establishment of localization in cell"/>
    <property type="evidence" value="ECO:0000266"/>
    <property type="project" value="RGD"/>
</dbReference>
<dbReference type="GO" id="GO:0006887">
    <property type="term" value="P:exocytosis"/>
    <property type="evidence" value="ECO:0000304"/>
    <property type="project" value="RGD"/>
</dbReference>
<dbReference type="GO" id="GO:0030073">
    <property type="term" value="P:insulin secretion"/>
    <property type="evidence" value="ECO:0000250"/>
    <property type="project" value="ParkinsonsUK-UCL"/>
</dbReference>
<dbReference type="GO" id="GO:0006886">
    <property type="term" value="P:intracellular protein transport"/>
    <property type="evidence" value="ECO:0007669"/>
    <property type="project" value="InterPro"/>
</dbReference>
<dbReference type="GO" id="GO:0007269">
    <property type="term" value="P:neurotransmitter secretion"/>
    <property type="evidence" value="ECO:0000266"/>
    <property type="project" value="RGD"/>
</dbReference>
<dbReference type="GO" id="GO:1903861">
    <property type="term" value="P:positive regulation of dendrite extension"/>
    <property type="evidence" value="ECO:0000266"/>
    <property type="project" value="RGD"/>
</dbReference>
<dbReference type="GO" id="GO:2000463">
    <property type="term" value="P:positive regulation of excitatory postsynaptic potential"/>
    <property type="evidence" value="ECO:0000250"/>
    <property type="project" value="ParkinsonsUK-UCL"/>
</dbReference>
<dbReference type="GO" id="GO:0010628">
    <property type="term" value="P:positive regulation of gene expression"/>
    <property type="evidence" value="ECO:0000266"/>
    <property type="project" value="RGD"/>
</dbReference>
<dbReference type="GO" id="GO:0097151">
    <property type="term" value="P:positive regulation of inhibitory postsynaptic potential"/>
    <property type="evidence" value="ECO:0000250"/>
    <property type="project" value="ParkinsonsUK-UCL"/>
</dbReference>
<dbReference type="GO" id="GO:0150037">
    <property type="term" value="P:regulation of calcium-dependent activation of synaptic vesicle fusion"/>
    <property type="evidence" value="ECO:0000266"/>
    <property type="project" value="RGD"/>
</dbReference>
<dbReference type="GO" id="GO:0017157">
    <property type="term" value="P:regulation of exocytosis"/>
    <property type="evidence" value="ECO:0000250"/>
    <property type="project" value="ParkinsonsUK-UCL"/>
</dbReference>
<dbReference type="GO" id="GO:0042391">
    <property type="term" value="P:regulation of membrane potential"/>
    <property type="evidence" value="ECO:0000250"/>
    <property type="project" value="ParkinsonsUK-UCL"/>
</dbReference>
<dbReference type="GO" id="GO:2000300">
    <property type="term" value="P:regulation of synaptic vesicle exocytosis"/>
    <property type="evidence" value="ECO:0000318"/>
    <property type="project" value="GO_Central"/>
</dbReference>
<dbReference type="GO" id="GO:0061669">
    <property type="term" value="P:spontaneous neurotransmitter secretion"/>
    <property type="evidence" value="ECO:0000250"/>
    <property type="project" value="ParkinsonsUK-UCL"/>
</dbReference>
<dbReference type="GO" id="GO:0016081">
    <property type="term" value="P:synaptic vesicle docking"/>
    <property type="evidence" value="ECO:0000266"/>
    <property type="project" value="RGD"/>
</dbReference>
<dbReference type="GO" id="GO:0016082">
    <property type="term" value="P:synaptic vesicle priming"/>
    <property type="evidence" value="ECO:0000266"/>
    <property type="project" value="RGD"/>
</dbReference>
<dbReference type="CDD" id="cd04031">
    <property type="entry name" value="C2A_RIM1alpha"/>
    <property type="match status" value="1"/>
</dbReference>
<dbReference type="CDD" id="cd04028">
    <property type="entry name" value="C2B_RIM1alpha"/>
    <property type="match status" value="1"/>
</dbReference>
<dbReference type="CDD" id="cd06714">
    <property type="entry name" value="PDZ_RIM-like"/>
    <property type="match status" value="1"/>
</dbReference>
<dbReference type="FunFam" id="2.60.40.150:FF:000001">
    <property type="entry name" value="Regulating synaptic membrane exocytosis 3, isoform CRA_a"/>
    <property type="match status" value="1"/>
</dbReference>
<dbReference type="FunFam" id="2.30.42.10:FF:000003">
    <property type="entry name" value="Regulating synaptic membrane exocytosis protein 1, putative"/>
    <property type="match status" value="1"/>
</dbReference>
<dbReference type="FunFam" id="2.60.40.150:FF:000003">
    <property type="entry name" value="Regulating synaptic membrane exocytosis protein 2"/>
    <property type="match status" value="1"/>
</dbReference>
<dbReference type="FunFam" id="3.30.40.10:FF:000044">
    <property type="entry name" value="Regulating synaptic membrane exocytosis protein 2"/>
    <property type="match status" value="1"/>
</dbReference>
<dbReference type="Gene3D" id="2.30.42.10">
    <property type="match status" value="1"/>
</dbReference>
<dbReference type="Gene3D" id="2.60.40.150">
    <property type="entry name" value="C2 domain"/>
    <property type="match status" value="2"/>
</dbReference>
<dbReference type="Gene3D" id="3.30.40.10">
    <property type="entry name" value="Zinc/RING finger domain, C3HC4 (zinc finger)"/>
    <property type="match status" value="1"/>
</dbReference>
<dbReference type="InterPro" id="IPR000008">
    <property type="entry name" value="C2_dom"/>
</dbReference>
<dbReference type="InterPro" id="IPR035892">
    <property type="entry name" value="C2_domain_sf"/>
</dbReference>
<dbReference type="InterPro" id="IPR001478">
    <property type="entry name" value="PDZ"/>
</dbReference>
<dbReference type="InterPro" id="IPR036034">
    <property type="entry name" value="PDZ_sf"/>
</dbReference>
<dbReference type="InterPro" id="IPR010911">
    <property type="entry name" value="Rab_BD"/>
</dbReference>
<dbReference type="InterPro" id="IPR039032">
    <property type="entry name" value="Rim-like"/>
</dbReference>
<dbReference type="InterPro" id="IPR054386">
    <property type="entry name" value="RIM_Znf"/>
</dbReference>
<dbReference type="InterPro" id="IPR017455">
    <property type="entry name" value="Znf_FYVE-rel"/>
</dbReference>
<dbReference type="InterPro" id="IPR011011">
    <property type="entry name" value="Znf_FYVE_PHD"/>
</dbReference>
<dbReference type="InterPro" id="IPR013083">
    <property type="entry name" value="Znf_RING/FYVE/PHD"/>
</dbReference>
<dbReference type="PANTHER" id="PTHR12157">
    <property type="entry name" value="REGULATING SYNAPTIC MEMBRANE EXOCYTOSIS PROTEIN"/>
    <property type="match status" value="1"/>
</dbReference>
<dbReference type="PANTHER" id="PTHR12157:SF15">
    <property type="entry name" value="REGULATING SYNAPTIC MEMBRANE EXOCYTOSIS PROTEIN 2"/>
    <property type="match status" value="1"/>
</dbReference>
<dbReference type="Pfam" id="PF00168">
    <property type="entry name" value="C2"/>
    <property type="match status" value="2"/>
</dbReference>
<dbReference type="Pfam" id="PF00595">
    <property type="entry name" value="PDZ"/>
    <property type="match status" value="1"/>
</dbReference>
<dbReference type="Pfam" id="PF22601">
    <property type="entry name" value="RIM2a_ZnF"/>
    <property type="match status" value="1"/>
</dbReference>
<dbReference type="SMART" id="SM00239">
    <property type="entry name" value="C2"/>
    <property type="match status" value="2"/>
</dbReference>
<dbReference type="SMART" id="SM00228">
    <property type="entry name" value="PDZ"/>
    <property type="match status" value="1"/>
</dbReference>
<dbReference type="SUPFAM" id="SSF49562">
    <property type="entry name" value="C2 domain (Calcium/lipid-binding domain, CaLB)"/>
    <property type="match status" value="2"/>
</dbReference>
<dbReference type="SUPFAM" id="SSF57903">
    <property type="entry name" value="FYVE/PHD zinc finger"/>
    <property type="match status" value="1"/>
</dbReference>
<dbReference type="SUPFAM" id="SSF50156">
    <property type="entry name" value="PDZ domain-like"/>
    <property type="match status" value="1"/>
</dbReference>
<dbReference type="PROSITE" id="PS50004">
    <property type="entry name" value="C2"/>
    <property type="match status" value="2"/>
</dbReference>
<dbReference type="PROSITE" id="PS50106">
    <property type="entry name" value="PDZ"/>
    <property type="match status" value="1"/>
</dbReference>
<dbReference type="PROSITE" id="PS50916">
    <property type="entry name" value="RABBD"/>
    <property type="match status" value="1"/>
</dbReference>
<dbReference type="PROSITE" id="PS50178">
    <property type="entry name" value="ZF_FYVE"/>
    <property type="match status" value="1"/>
</dbReference>
<proteinExistence type="evidence at protein level"/>
<comment type="function">
    <text evidence="3">Rab effector involved in exocytosis. May act as scaffold protein. Plays a role in dendrite formation by melanocytes (By similarity).</text>
</comment>
<comment type="subunit">
    <text evidence="1 9 10 11 12">Heterodimer with PCLO. Part of a ternary complex involving PCLO and EPAC2. Interacts with RAB3C, RAB3D and RAB26 (By similarity). Binds RAB3A and RAB3B that have been activated by GTP-binding. Interacts with TSPOAP1 and RIMBP2. Interacts with PPFIA3 and PPFIA4. Interacts via its zinc finger with the first C2 domain of UNC13A. Forms a complex consisting of UNC13A, RIMS2 and RAB3A.</text>
</comment>
<comment type="interaction">
    <interactant intactId="EBI-6972631">
        <id>Q9JIS1</id>
    </interactant>
    <interactant intactId="EBI-15584670">
        <id>Q62768</id>
        <label>Unc13a</label>
    </interactant>
    <organismsDiffer>false</organismsDiffer>
    <experiments>4</experiments>
</comment>
<comment type="subcellular location">
    <subcellularLocation>
        <location evidence="1">Cell membrane</location>
        <topology evidence="1">Peripheral membrane protein</topology>
    </subcellularLocation>
    <subcellularLocation>
        <location evidence="1">Synapse</location>
    </subcellularLocation>
    <subcellularLocation>
        <location evidence="1">Presynaptic cell membrane</location>
        <topology evidence="1">Peripheral membrane protein</topology>
    </subcellularLocation>
</comment>
<comment type="alternative products">
    <event type="alternative splicing"/>
    <isoform>
        <id>Q9JIS1-1</id>
        <name>1</name>
        <name>RIM2-alpha</name>
        <sequence type="displayed"/>
    </isoform>
    <isoform>
        <id>Q9JIS1-2</id>
        <name>2</name>
        <name>RIM2-2B</name>
        <sequence type="described" ref="VSP_008186 VSP_008187 VSP_008189"/>
    </isoform>
    <isoform>
        <id>Q9JIS1-3</id>
        <name>3</name>
        <name>RIM2-4C</name>
        <sequence type="described" ref="VSP_008187 VSP_008188 VSP_008189"/>
    </isoform>
    <isoform>
        <id>Q9JIS1-4</id>
        <name>4</name>
        <name>RIM2-5C</name>
        <name>RIM2-2A</name>
        <name>RIM2-3B</name>
        <name>RIM2-4A</name>
        <sequence type="described" ref="VSP_008187 VSP_008189"/>
    </isoform>
    <isoform>
        <id>Q9JIS1-5</id>
        <name>5</name>
        <name>RIM2-3A</name>
        <sequence type="described" ref="VSP_008189"/>
    </isoform>
    <isoform>
        <id>Q9JIS1-6</id>
        <name>6</name>
        <name>RIM2-4B</name>
        <sequence type="described" ref="VSP_008187 VSP_008191 VSP_008189"/>
    </isoform>
    <isoform>
        <id>Q9JIS1-7</id>
        <name>7</name>
        <name>RIM2-beta</name>
        <name>RIM2beta</name>
        <sequence type="described" ref="VSP_008185"/>
    </isoform>
    <isoform>
        <id>Q9JIS1-8</id>
        <name>8</name>
        <name>RIM2-5B</name>
        <sequence type="described" ref="VSP_008187 VSP_008190"/>
    </isoform>
    <isoform>
        <id>Q9JIS1-9</id>
        <name>9</name>
        <name>RIM2-5A</name>
        <sequence type="described" ref="VSP_008187"/>
    </isoform>
    <isoform>
        <id>Q9JIS1-10</id>
        <name>10</name>
        <name>RIM2-gamma</name>
        <name>NIM2</name>
        <sequence type="described" ref="VSP_008192 VSP_008193"/>
    </isoform>
    <text>Additional isoforms seem to exist.</text>
</comment>
<comment type="tissue specificity">
    <text evidence="9">Highly expressed in hippocampus, brain cortex, cerebellum and olfactory bulb. Detected at intermediate levels in midbrain, hindbrain and spinal cord, and at low levels in testis.</text>
</comment>
<accession>Q9JIS1</accession>
<accession>Q8CIX2</accession>
<accession>Q9JHJ6</accession>
<accession>Q9JIR2</accession>
<accession>Q9JIR5</accession>
<accession>Q9JIR6</accession>
<accession>Q9JIR7</accession>
<accession>Q9JIR8</accession>
<accession>Q9JIR9</accession>
<accession>Q9JIS0</accession>
<sequence length="1555" mass="175913">MSAPLGPRGRPAPTPAASQPPPQPEMPDLSHLTEEERKIIQAVMDRQKKEEEKEQSVLKKLHQQFEMYKEQVKKMGEESQQQQEQKGDAPTCGICHKTKFADGCGHNCSYCQTKFCARCGGRVSLRSNKVMWVCNLCRKQQEILTKSGAWFYNSGSNTPQQPDQKALRGLRSEEAPQEKKAKLHEQTQFQGPPGDSSVPAVERGRAHGLTRQDSIKNGSGMKHQIASDMPSDRKRSPSVSRDQNRRYDQSEEREEYSQYVPSDSTMPRSPSDYADRRSQREPQFYEEPDHLNYRDSNRRGHRHSKEYIVDDEDVESRDEYERQRREEEYQARYRSDPNLARYPVKPQPYEEQMRIHAEVSRARHERRHSDVSLANAELEDSRISLLRMDRPSRQRSVSERRAAMENQRSYSMERTREAQGQSSYPQRTTNHSPPTPRRSPIPLDRPELRRADSLRKQHHLDPSSAVRKTKREKMETMLRNDSLSSDQSESVRPPPPRPHKSKKGGKMRQVSLSSSEEELASTPEYTSCDDVEIESESVGEKGDMEYSWLEHASWHSSEASPMSLHPVTWQPSKDGDRLIGRILLNKRLKDGSVPRDSGAMLGLKVVGGKMTESGRLCAFITKVKKGSLADTVGHLRPGDEVLEWNGRLLQGATFEEVYNIILESKPEPQVELVVSRPIGDMPRIPDSTHAQLESSSSSFESQKMDRPSISVTSPMSPGMLRDVPQFLSGQLSSQSLSRRTTPFVPRVQIKLWFDKVGHQLIVTILGAKDLPSREDGRPRNPYVKIYFLPDRSDKNKRRTKTVKKTLEPKWNQTFIYSPVHRREFRERMLEITLWDQARVREEESEFLGEILIELETALLDDEPHWYKLQTHDVSSLPLPHPSPYMPRRQLHGESPTRRLQRSKRISDSEVSDYDCEDGVGVVSDYRHDGRDLQSSTLSVPEQVMSSNHCSPSGSPHRVDVIGRTRSWSPSVPPPQRNVEQGLRGTRATGHYNTISRMDRHRVMDDHYSSERDSHFLTLPRSRHRQTSEHHHRDGRDCEAADRQPYHRSRSTEQRPLLERTTTRSRSSERADTNLMRSMPSLMTGRSAPPSPALSRSHPRTGSVQTSPSSTPVTGRRGRQLPQLPPKGTLERMITEDMDSTRKRNSGAMDIEERNRQMKLNKYKQVAGSDPRLEQDYHSKYRSGWDPHRGADTVSTKSSDSDVSDVSAVSRTSSASRFSSTSYMSVQSERPRGNRKISVFTSKMQSRQMGVSGKSMAKSTSISGDMCSLEKNDGSQSDTAVGALGTSGKKRRSSIGAKMVAIVGLSRKSRSASQLSQTEGGGKKLRSTVQRSTETGLAVEMRNWMTRQASRESTDGSMNSYSSEGNLIFPGVRLASDSQFSDFLDGLGPAQLVGRQTLATPAMGDIQVGMMDKKGQLEVEIIRARGLVVKPGSKTLPAPYVKVYLLDNGVCIAKKKTKVARKTLEPLYQQLLSFEESPQGKVLQIIVWGDYGRMDHKSFMGVAQILLDELELSNMVIGWFKLFPPSSLVDPTLAPLTRRASQSSLESSTGPSYSRS</sequence>
<feature type="chain" id="PRO_0000190203" description="Regulating synaptic membrane exocytosis protein 2">
    <location>
        <begin position="1"/>
        <end position="1555"/>
    </location>
</feature>
<feature type="domain" description="RabBD" evidence="7">
    <location>
        <begin position="26"/>
        <end position="154"/>
    </location>
</feature>
<feature type="domain" description="PDZ" evidence="6">
    <location>
        <begin position="590"/>
        <end position="676"/>
    </location>
</feature>
<feature type="domain" description="C2 1" evidence="4">
    <location>
        <begin position="743"/>
        <end position="866"/>
    </location>
</feature>
<feature type="domain" description="C2 2" evidence="4">
    <location>
        <begin position="1401"/>
        <end position="1519"/>
    </location>
</feature>
<feature type="zinc finger region" description="FYVE-type" evidence="5">
    <location>
        <begin position="86"/>
        <end position="142"/>
    </location>
</feature>
<feature type="region of interest" description="Disordered" evidence="8">
    <location>
        <begin position="1"/>
        <end position="35"/>
    </location>
</feature>
<feature type="region of interest" description="Disordered" evidence="8">
    <location>
        <begin position="154"/>
        <end position="530"/>
    </location>
</feature>
<feature type="region of interest" description="Disordered" evidence="8">
    <location>
        <begin position="682"/>
        <end position="716"/>
    </location>
</feature>
<feature type="region of interest" description="Disordered" evidence="8">
    <location>
        <begin position="877"/>
        <end position="913"/>
    </location>
</feature>
<feature type="region of interest" description="Disordered" evidence="8">
    <location>
        <begin position="935"/>
        <end position="1145"/>
    </location>
</feature>
<feature type="region of interest" description="Disordered" evidence="8">
    <location>
        <begin position="1180"/>
        <end position="1207"/>
    </location>
</feature>
<feature type="region of interest" description="Disordered" evidence="8">
    <location>
        <begin position="1268"/>
        <end position="1288"/>
    </location>
</feature>
<feature type="region of interest" description="Disordered" evidence="8">
    <location>
        <begin position="1307"/>
        <end position="1332"/>
    </location>
</feature>
<feature type="compositionally biased region" description="Pro residues" evidence="8">
    <location>
        <begin position="10"/>
        <end position="25"/>
    </location>
</feature>
<feature type="compositionally biased region" description="Polar residues" evidence="8">
    <location>
        <begin position="154"/>
        <end position="163"/>
    </location>
</feature>
<feature type="compositionally biased region" description="Basic and acidic residues" evidence="8">
    <location>
        <begin position="170"/>
        <end position="185"/>
    </location>
</feature>
<feature type="compositionally biased region" description="Polar residues" evidence="8">
    <location>
        <begin position="259"/>
        <end position="268"/>
    </location>
</feature>
<feature type="compositionally biased region" description="Basic and acidic residues" evidence="8">
    <location>
        <begin position="287"/>
        <end position="298"/>
    </location>
</feature>
<feature type="compositionally biased region" description="Basic and acidic residues" evidence="8">
    <location>
        <begin position="317"/>
        <end position="335"/>
    </location>
</feature>
<feature type="compositionally biased region" description="Basic and acidic residues" evidence="8">
    <location>
        <begin position="351"/>
        <end position="370"/>
    </location>
</feature>
<feature type="compositionally biased region" description="Basic and acidic residues" evidence="8">
    <location>
        <begin position="379"/>
        <end position="403"/>
    </location>
</feature>
<feature type="compositionally biased region" description="Polar residues" evidence="8">
    <location>
        <begin position="418"/>
        <end position="432"/>
    </location>
</feature>
<feature type="compositionally biased region" description="Basic and acidic residues" evidence="8">
    <location>
        <begin position="444"/>
        <end position="461"/>
    </location>
</feature>
<feature type="compositionally biased region" description="Polar residues" evidence="8">
    <location>
        <begin position="479"/>
        <end position="490"/>
    </location>
</feature>
<feature type="compositionally biased region" description="Basic residues" evidence="8">
    <location>
        <begin position="497"/>
        <end position="506"/>
    </location>
</feature>
<feature type="compositionally biased region" description="Polar residues" evidence="8">
    <location>
        <begin position="935"/>
        <end position="953"/>
    </location>
</feature>
<feature type="compositionally biased region" description="Basic and acidic residues" evidence="8">
    <location>
        <begin position="996"/>
        <end position="1014"/>
    </location>
</feature>
<feature type="compositionally biased region" description="Basic and acidic residues" evidence="8">
    <location>
        <begin position="1025"/>
        <end position="1071"/>
    </location>
</feature>
<feature type="compositionally biased region" description="Low complexity" evidence="8">
    <location>
        <begin position="1092"/>
        <end position="1114"/>
    </location>
</feature>
<feature type="compositionally biased region" description="Basic and acidic residues" evidence="8">
    <location>
        <begin position="1128"/>
        <end position="1141"/>
    </location>
</feature>
<feature type="compositionally biased region" description="Basic and acidic residues" evidence="8">
    <location>
        <begin position="1180"/>
        <end position="1190"/>
    </location>
</feature>
<feature type="binding site" evidence="5">
    <location>
        <position position="92"/>
    </location>
    <ligand>
        <name>Zn(2+)</name>
        <dbReference type="ChEBI" id="CHEBI:29105"/>
        <label>1</label>
    </ligand>
</feature>
<feature type="binding site" evidence="5">
    <location>
        <position position="95"/>
    </location>
    <ligand>
        <name>Zn(2+)</name>
        <dbReference type="ChEBI" id="CHEBI:29105"/>
        <label>1</label>
    </ligand>
</feature>
<feature type="binding site" evidence="5">
    <location>
        <position position="108"/>
    </location>
    <ligand>
        <name>Zn(2+)</name>
        <dbReference type="ChEBI" id="CHEBI:29105"/>
        <label>2</label>
    </ligand>
</feature>
<feature type="binding site" evidence="5">
    <location>
        <position position="111"/>
    </location>
    <ligand>
        <name>Zn(2+)</name>
        <dbReference type="ChEBI" id="CHEBI:29105"/>
        <label>2</label>
    </ligand>
</feature>
<feature type="binding site" evidence="5">
    <location>
        <position position="116"/>
    </location>
    <ligand>
        <name>Zn(2+)</name>
        <dbReference type="ChEBI" id="CHEBI:29105"/>
        <label>1</label>
    </ligand>
</feature>
<feature type="binding site" evidence="5">
    <location>
        <position position="119"/>
    </location>
    <ligand>
        <name>Zn(2+)</name>
        <dbReference type="ChEBI" id="CHEBI:29105"/>
        <label>1</label>
    </ligand>
</feature>
<feature type="binding site" evidence="5">
    <location>
        <position position="134"/>
    </location>
    <ligand>
        <name>Zn(2+)</name>
        <dbReference type="ChEBI" id="CHEBI:29105"/>
        <label>2</label>
    </ligand>
</feature>
<feature type="binding site" evidence="5">
    <location>
        <position position="137"/>
    </location>
    <ligand>
        <name>Zn(2+)</name>
        <dbReference type="ChEBI" id="CHEBI:29105"/>
        <label>2</label>
    </ligand>
</feature>
<feature type="modified residue" description="Phosphoserine" evidence="3">
    <location>
        <position position="369"/>
    </location>
</feature>
<feature type="modified residue" description="Phosphothreonine" evidence="3">
    <location>
        <position position="611"/>
    </location>
</feature>
<feature type="modified residue" description="Phosphoserine" evidence="2">
    <location>
        <position position="713"/>
    </location>
</feature>
<feature type="modified residue" description="Phosphoserine" evidence="2">
    <location>
        <position position="716"/>
    </location>
</feature>
<feature type="modified residue" description="Phosphoserine" evidence="15">
    <location>
        <position position="1106"/>
    </location>
</feature>
<feature type="modified residue" description="Phosphoserine" evidence="15">
    <location>
        <position position="1200"/>
    </location>
</feature>
<feature type="modified residue" description="Phosphoserine" evidence="15">
    <location>
        <position position="1276"/>
    </location>
</feature>
<feature type="modified residue" description="Phosphoserine" evidence="15">
    <location>
        <position position="1540"/>
    </location>
</feature>
<feature type="modified residue" description="Phosphoserine" evidence="15">
    <location>
        <position position="1543"/>
    </location>
</feature>
<feature type="splice variant" id="VSP_008192" description="In isoform 10." evidence="13">
    <location>
        <begin position="1"/>
        <end position="1270"/>
    </location>
</feature>
<feature type="splice variant" id="VSP_008185" description="In isoform 7." evidence="14">
    <original>MSAPLGPRGRPAPTPAASQPPPQPEMPDLSHLTEEERKIIQAVMDRQKKEEEKEQSVLKKLHQQFEMYKEQVKKMGEESQQQQEQKGDAPTCGICHKTKFADGCGHNCSYCQTKFCARCGGRVSLRSNKVMWVCNLCRKQQEILTKSGAWFYNSGSNTPQQPDQKALRGLRSEEAPQEKKAKLHEQTQFQGPPGDSSVPAVERGRAHGLTRQDSIKNGSGMKHQIASDMPSD</original>
    <variation>MQFETLRQVCNSVLSHFHGVFSSPPNILQNELFGQTLNNA</variation>
    <location>
        <begin position="1"/>
        <end position="232"/>
    </location>
</feature>
<feature type="splice variant" id="VSP_008186" description="In isoform 2." evidence="13">
    <original>MEYSWLEHASWHSSEASPMSL</original>
    <variation>SQKGKRKTSEQAVWSDSNTRSERQKKVMYSGGHSLDEDLEWSEPQTKDSGVDTCSSTTLNEERSHSDE</variation>
    <location>
        <begin position="544"/>
        <end position="564"/>
    </location>
</feature>
<feature type="splice variant" id="VSP_008187" description="In isoform 2, isoform 3, isoform 4, isoform 6, isoform 8 and isoform 9." evidence="13">
    <location>
        <begin position="733"/>
        <end position="748"/>
    </location>
</feature>
<feature type="splice variant" id="VSP_008188" description="In isoform 3." evidence="13">
    <location>
        <begin position="1013"/>
        <end position="1034"/>
    </location>
</feature>
<feature type="splice variant" id="VSP_008191" description="In isoform 6." evidence="13">
    <location>
        <begin position="1035"/>
        <end position="1094"/>
    </location>
</feature>
<feature type="splice variant" id="VSP_008189" description="In isoform 2, isoform 3, isoform 4, isoform 5 and isoform 6." evidence="13">
    <location>
        <begin position="1132"/>
        <end position="1318"/>
    </location>
</feature>
<feature type="splice variant" id="VSP_008190" description="In isoform 8." evidence="13">
    <original>MITEDMDSTRKRNSG</original>
    <variation>S</variation>
    <location>
        <begin position="1132"/>
        <end position="1146"/>
    </location>
</feature>
<feature type="splice variant" id="VSP_008193" description="In isoform 10." evidence="13">
    <original>NDGSQSDTAVGALGTSGKKRRSSIGAKMVAIVGLSRKSRSASQLSQT</original>
    <variation>MGRQGLGGTGAAGRSMQRSQSRSSLSASFEALAGYFPCMNSLEEDEG</variation>
    <location>
        <begin position="1271"/>
        <end position="1317"/>
    </location>
</feature>
<feature type="turn" evidence="17">
    <location>
        <begin position="93"/>
        <end position="95"/>
    </location>
</feature>
<feature type="strand" evidence="17">
    <location>
        <begin position="105"/>
        <end position="107"/>
    </location>
</feature>
<feature type="turn" evidence="17">
    <location>
        <begin position="109"/>
        <end position="111"/>
    </location>
</feature>
<feature type="strand" evidence="17">
    <location>
        <begin position="119"/>
        <end position="125"/>
    </location>
</feature>
<feature type="turn" evidence="17">
    <location>
        <begin position="126"/>
        <end position="128"/>
    </location>
</feature>
<feature type="strand" evidence="17">
    <location>
        <begin position="129"/>
        <end position="134"/>
    </location>
</feature>
<feature type="helix" evidence="17">
    <location>
        <begin position="135"/>
        <end position="141"/>
    </location>
</feature>
<feature type="strand" evidence="16">
    <location>
        <begin position="730"/>
        <end position="732"/>
    </location>
</feature>
<feature type="strand" evidence="16">
    <location>
        <begin position="749"/>
        <end position="754"/>
    </location>
</feature>
<feature type="turn" evidence="16">
    <location>
        <begin position="755"/>
        <end position="758"/>
    </location>
</feature>
<feature type="strand" evidence="16">
    <location>
        <begin position="759"/>
        <end position="769"/>
    </location>
</feature>
<feature type="strand" evidence="16">
    <location>
        <begin position="781"/>
        <end position="790"/>
    </location>
</feature>
<feature type="helix" evidence="16">
    <location>
        <begin position="793"/>
        <end position="795"/>
    </location>
</feature>
<feature type="strand" evidence="16">
    <location>
        <begin position="796"/>
        <end position="798"/>
    </location>
</feature>
<feature type="strand" evidence="16">
    <location>
        <begin position="803"/>
        <end position="807"/>
    </location>
</feature>
<feature type="strand" evidence="16">
    <location>
        <begin position="809"/>
        <end position="816"/>
    </location>
</feature>
<feature type="helix" evidence="16">
    <location>
        <begin position="821"/>
        <end position="826"/>
    </location>
</feature>
<feature type="strand" evidence="16">
    <location>
        <begin position="828"/>
        <end position="835"/>
    </location>
</feature>
<feature type="strand" evidence="16">
    <location>
        <begin position="845"/>
        <end position="853"/>
    </location>
</feature>
<feature type="helix" evidence="16">
    <location>
        <begin position="854"/>
        <end position="856"/>
    </location>
</feature>
<feature type="strand" evidence="16">
    <location>
        <begin position="863"/>
        <end position="867"/>
    </location>
</feature>
<protein>
    <recommendedName>
        <fullName>Regulating synaptic membrane exocytosis protein 2</fullName>
    </recommendedName>
    <alternativeName>
        <fullName>Rab-3-interacting molecule 2</fullName>
        <shortName>RIM 2</shortName>
    </alternativeName>
</protein>